<feature type="chain" id="PRO_0000066704" description="Homoserine dehydrogenase">
    <location>
        <begin position="1"/>
        <end position="433"/>
    </location>
</feature>
<feature type="domain" description="ACT" evidence="5">
    <location>
        <begin position="356"/>
        <end position="433"/>
    </location>
</feature>
<feature type="active site" description="Proton donor" evidence="4">
    <location>
        <position position="202"/>
    </location>
</feature>
<feature type="binding site" evidence="2">
    <location>
        <position position="12"/>
    </location>
    <ligand>
        <name>NADPH</name>
        <dbReference type="ChEBI" id="CHEBI:57783"/>
    </ligand>
</feature>
<feature type="binding site" evidence="3">
    <location>
        <position position="13"/>
    </location>
    <ligand>
        <name>NAD(+)</name>
        <dbReference type="ChEBI" id="CHEBI:57540"/>
    </ligand>
</feature>
<feature type="binding site" evidence="1">
    <location>
        <position position="13"/>
    </location>
    <ligand>
        <name>NADP(+)</name>
        <dbReference type="ChEBI" id="CHEBI:58349"/>
    </ligand>
</feature>
<feature type="binding site" evidence="2">
    <location>
        <position position="13"/>
    </location>
    <ligand>
        <name>NADPH</name>
        <dbReference type="ChEBI" id="CHEBI:57783"/>
    </ligand>
</feature>
<feature type="binding site" evidence="1">
    <location>
        <position position="102"/>
    </location>
    <ligand>
        <name>NADP(+)</name>
        <dbReference type="ChEBI" id="CHEBI:58349"/>
    </ligand>
</feature>
<feature type="binding site" evidence="2">
    <location>
        <position position="102"/>
    </location>
    <ligand>
        <name>NADPH</name>
        <dbReference type="ChEBI" id="CHEBI:57783"/>
    </ligand>
</feature>
<feature type="binding site" evidence="3">
    <location>
        <position position="126"/>
    </location>
    <ligand>
        <name>Na(+)</name>
        <dbReference type="ChEBI" id="CHEBI:29101"/>
    </ligand>
</feature>
<feature type="binding site" evidence="3">
    <location>
        <position position="129"/>
    </location>
    <ligand>
        <name>Na(+)</name>
        <dbReference type="ChEBI" id="CHEBI:29101"/>
    </ligand>
</feature>
<feature type="binding site" evidence="3">
    <location>
        <position position="131"/>
    </location>
    <ligand>
        <name>Na(+)</name>
        <dbReference type="ChEBI" id="CHEBI:29101"/>
    </ligand>
</feature>
<feature type="binding site" evidence="3">
    <location>
        <position position="133"/>
    </location>
    <ligand>
        <name>Na(+)</name>
        <dbReference type="ChEBI" id="CHEBI:29101"/>
    </ligand>
</feature>
<feature type="binding site" evidence="1">
    <location>
        <position position="184"/>
    </location>
    <ligand>
        <name>NADP(+)</name>
        <dbReference type="ChEBI" id="CHEBI:58349"/>
    </ligand>
</feature>
<feature type="binding site" evidence="3">
    <location>
        <position position="187"/>
    </location>
    <ligand>
        <name>L-homoserine</name>
        <dbReference type="ChEBI" id="CHEBI:57476"/>
    </ligand>
</feature>
<feature type="binding site" evidence="1">
    <location>
        <position position="187"/>
    </location>
    <ligand>
        <name>NADP(+)</name>
        <dbReference type="ChEBI" id="CHEBI:58349"/>
    </ligand>
</feature>
<feature type="binding site" evidence="3">
    <location>
        <position position="198"/>
    </location>
    <ligand>
        <name>L-homoserine</name>
        <dbReference type="ChEBI" id="CHEBI:57476"/>
    </ligand>
</feature>
<feature type="binding site" evidence="3">
    <location>
        <position position="303"/>
    </location>
    <ligand>
        <name>NAD(+)</name>
        <dbReference type="ChEBI" id="CHEBI:57540"/>
    </ligand>
</feature>
<feature type="binding site" evidence="1">
    <location>
        <position position="303"/>
    </location>
    <ligand>
        <name>NADP(+)</name>
        <dbReference type="ChEBI" id="CHEBI:58349"/>
    </ligand>
</feature>
<feature type="binding site" evidence="2">
    <location>
        <position position="303"/>
    </location>
    <ligand>
        <name>NADPH</name>
        <dbReference type="ChEBI" id="CHEBI:57783"/>
    </ligand>
</feature>
<protein>
    <recommendedName>
        <fullName>Homoserine dehydrogenase</fullName>
        <shortName>HDH</shortName>
        <shortName>HSD</shortName>
        <ecNumber evidence="3">1.1.1.3</ecNumber>
    </recommendedName>
</protein>
<evidence type="ECO:0000250" key="1">
    <source>
        <dbReference type="UniProtKB" id="F9VNG5"/>
    </source>
</evidence>
<evidence type="ECO:0000250" key="2">
    <source>
        <dbReference type="UniProtKB" id="O58802"/>
    </source>
</evidence>
<evidence type="ECO:0000250" key="3">
    <source>
        <dbReference type="UniProtKB" id="P31116"/>
    </source>
</evidence>
<evidence type="ECO:0000255" key="4"/>
<evidence type="ECO:0000255" key="5">
    <source>
        <dbReference type="PROSITE-ProRule" id="PRU01007"/>
    </source>
</evidence>
<evidence type="ECO:0000305" key="6"/>
<name>DHOM_SYNY3</name>
<organism>
    <name type="scientific">Synechocystis sp. (strain ATCC 27184 / PCC 6803 / Kazusa)</name>
    <dbReference type="NCBI Taxonomy" id="1111708"/>
    <lineage>
        <taxon>Bacteria</taxon>
        <taxon>Bacillati</taxon>
        <taxon>Cyanobacteriota</taxon>
        <taxon>Cyanophyceae</taxon>
        <taxon>Synechococcales</taxon>
        <taxon>Merismopediaceae</taxon>
        <taxon>Synechocystis</taxon>
    </lineage>
</organism>
<reference key="1">
    <citation type="journal article" date="1995" name="DNA Res.">
        <title>Sequence analysis of the genome of the unicellular cyanobacterium Synechocystis sp. strain PCC6803. I. Sequence features in the 1 Mb region from map positions 64% to 92% of the genome.</title>
        <authorList>
            <person name="Kaneko T."/>
            <person name="Tanaka A."/>
            <person name="Sato S."/>
            <person name="Kotani H."/>
            <person name="Sazuka T."/>
            <person name="Miyajima N."/>
            <person name="Sugiura M."/>
            <person name="Tabata S."/>
        </authorList>
    </citation>
    <scope>NUCLEOTIDE SEQUENCE [LARGE SCALE GENOMIC DNA]</scope>
    <source>
        <strain>ATCC 27184 / PCC 6803 / N-1</strain>
    </source>
</reference>
<reference key="2">
    <citation type="journal article" date="1996" name="DNA Res.">
        <title>Sequence analysis of the genome of the unicellular cyanobacterium Synechocystis sp. strain PCC6803. II. Sequence determination of the entire genome and assignment of potential protein-coding regions.</title>
        <authorList>
            <person name="Kaneko T."/>
            <person name="Sato S."/>
            <person name="Kotani H."/>
            <person name="Tanaka A."/>
            <person name="Asamizu E."/>
            <person name="Nakamura Y."/>
            <person name="Miyajima N."/>
            <person name="Hirosawa M."/>
            <person name="Sugiura M."/>
            <person name="Sasamoto S."/>
            <person name="Kimura T."/>
            <person name="Hosouchi T."/>
            <person name="Matsuno A."/>
            <person name="Muraki A."/>
            <person name="Nakazaki N."/>
            <person name="Naruo K."/>
            <person name="Okumura S."/>
            <person name="Shimpo S."/>
            <person name="Takeuchi C."/>
            <person name="Wada T."/>
            <person name="Watanabe A."/>
            <person name="Yamada M."/>
            <person name="Yasuda M."/>
            <person name="Tabata S."/>
        </authorList>
    </citation>
    <scope>NUCLEOTIDE SEQUENCE [LARGE SCALE GENOMIC DNA]</scope>
    <source>
        <strain>ATCC 27184 / PCC 6803 / Kazusa</strain>
    </source>
</reference>
<dbReference type="EC" id="1.1.1.3" evidence="3"/>
<dbReference type="EMBL" id="BA000022">
    <property type="protein sequence ID" value="BAA10325.1"/>
    <property type="molecule type" value="Genomic_DNA"/>
</dbReference>
<dbReference type="PIR" id="S74407">
    <property type="entry name" value="S74407"/>
</dbReference>
<dbReference type="SMR" id="P52986"/>
<dbReference type="FunCoup" id="P52986">
    <property type="interactions" value="428"/>
</dbReference>
<dbReference type="IntAct" id="P52986">
    <property type="interactions" value="2"/>
</dbReference>
<dbReference type="STRING" id="1148.gene:10499825"/>
<dbReference type="PaxDb" id="1148-1001182"/>
<dbReference type="EnsemblBacteria" id="BAA10325">
    <property type="protein sequence ID" value="BAA10325"/>
    <property type="gene ID" value="BAA10325"/>
</dbReference>
<dbReference type="KEGG" id="syn:sll0455"/>
<dbReference type="eggNOG" id="COG0460">
    <property type="taxonomic scope" value="Bacteria"/>
</dbReference>
<dbReference type="InParanoid" id="P52986"/>
<dbReference type="PhylomeDB" id="P52986"/>
<dbReference type="UniPathway" id="UPA00050">
    <property type="reaction ID" value="UER00063"/>
</dbReference>
<dbReference type="UniPathway" id="UPA00051">
    <property type="reaction ID" value="UER00465"/>
</dbReference>
<dbReference type="Proteomes" id="UP000001425">
    <property type="component" value="Chromosome"/>
</dbReference>
<dbReference type="GO" id="GO:0004412">
    <property type="term" value="F:homoserine dehydrogenase activity"/>
    <property type="evidence" value="ECO:0000250"/>
    <property type="project" value="UniProtKB"/>
</dbReference>
<dbReference type="GO" id="GO:0046872">
    <property type="term" value="F:metal ion binding"/>
    <property type="evidence" value="ECO:0007669"/>
    <property type="project" value="UniProtKB-KW"/>
</dbReference>
<dbReference type="GO" id="GO:0070403">
    <property type="term" value="F:NAD+ binding"/>
    <property type="evidence" value="ECO:0000250"/>
    <property type="project" value="UniProtKB"/>
</dbReference>
<dbReference type="GO" id="GO:0050661">
    <property type="term" value="F:NADP binding"/>
    <property type="evidence" value="ECO:0007669"/>
    <property type="project" value="InterPro"/>
</dbReference>
<dbReference type="GO" id="GO:0009086">
    <property type="term" value="P:methionine biosynthetic process"/>
    <property type="evidence" value="ECO:0000250"/>
    <property type="project" value="UniProtKB"/>
</dbReference>
<dbReference type="GO" id="GO:0009088">
    <property type="term" value="P:threonine biosynthetic process"/>
    <property type="evidence" value="ECO:0000250"/>
    <property type="project" value="UniProtKB"/>
</dbReference>
<dbReference type="CDD" id="cd04881">
    <property type="entry name" value="ACT_HSDH-Hom"/>
    <property type="match status" value="1"/>
</dbReference>
<dbReference type="FunFam" id="3.30.360.10:FF:000005">
    <property type="entry name" value="Homoserine dehydrogenase"/>
    <property type="match status" value="1"/>
</dbReference>
<dbReference type="Gene3D" id="3.30.70.260">
    <property type="match status" value="1"/>
</dbReference>
<dbReference type="Gene3D" id="3.30.360.10">
    <property type="entry name" value="Dihydrodipicolinate Reductase, domain 2"/>
    <property type="match status" value="1"/>
</dbReference>
<dbReference type="Gene3D" id="3.40.50.720">
    <property type="entry name" value="NAD(P)-binding Rossmann-like Domain"/>
    <property type="match status" value="1"/>
</dbReference>
<dbReference type="InterPro" id="IPR045865">
    <property type="entry name" value="ACT-like_dom_sf"/>
</dbReference>
<dbReference type="InterPro" id="IPR002912">
    <property type="entry name" value="ACT_dom"/>
</dbReference>
<dbReference type="InterPro" id="IPR005106">
    <property type="entry name" value="Asp/hSer_DH_NAD-bd"/>
</dbReference>
<dbReference type="InterPro" id="IPR016204">
    <property type="entry name" value="HDH"/>
</dbReference>
<dbReference type="InterPro" id="IPR001342">
    <property type="entry name" value="HDH_cat"/>
</dbReference>
<dbReference type="InterPro" id="IPR019811">
    <property type="entry name" value="HDH_CS"/>
</dbReference>
<dbReference type="InterPro" id="IPR036291">
    <property type="entry name" value="NAD(P)-bd_dom_sf"/>
</dbReference>
<dbReference type="NCBIfam" id="NF004976">
    <property type="entry name" value="PRK06349.1"/>
    <property type="match status" value="1"/>
</dbReference>
<dbReference type="PANTHER" id="PTHR43331">
    <property type="entry name" value="HOMOSERINE DEHYDROGENASE"/>
    <property type="match status" value="1"/>
</dbReference>
<dbReference type="PANTHER" id="PTHR43331:SF1">
    <property type="entry name" value="HOMOSERINE DEHYDROGENASE"/>
    <property type="match status" value="1"/>
</dbReference>
<dbReference type="Pfam" id="PF01842">
    <property type="entry name" value="ACT"/>
    <property type="match status" value="1"/>
</dbReference>
<dbReference type="Pfam" id="PF00742">
    <property type="entry name" value="Homoserine_dh"/>
    <property type="match status" value="1"/>
</dbReference>
<dbReference type="Pfam" id="PF03447">
    <property type="entry name" value="NAD_binding_3"/>
    <property type="match status" value="1"/>
</dbReference>
<dbReference type="PIRSF" id="PIRSF000098">
    <property type="entry name" value="Homoser_dehydrog"/>
    <property type="match status" value="1"/>
</dbReference>
<dbReference type="SUPFAM" id="SSF55021">
    <property type="entry name" value="ACT-like"/>
    <property type="match status" value="1"/>
</dbReference>
<dbReference type="SUPFAM" id="SSF55347">
    <property type="entry name" value="Glyceraldehyde-3-phosphate dehydrogenase-like, C-terminal domain"/>
    <property type="match status" value="1"/>
</dbReference>
<dbReference type="SUPFAM" id="SSF51735">
    <property type="entry name" value="NAD(P)-binding Rossmann-fold domains"/>
    <property type="match status" value="1"/>
</dbReference>
<dbReference type="PROSITE" id="PS51671">
    <property type="entry name" value="ACT"/>
    <property type="match status" value="1"/>
</dbReference>
<dbReference type="PROSITE" id="PS01042">
    <property type="entry name" value="HOMOSER_DHGENASE"/>
    <property type="match status" value="1"/>
</dbReference>
<proteinExistence type="inferred from homology"/>
<keyword id="KW-0028">Amino-acid biosynthesis</keyword>
<keyword id="KW-0479">Metal-binding</keyword>
<keyword id="KW-0486">Methionine biosynthesis</keyword>
<keyword id="KW-0520">NAD</keyword>
<keyword id="KW-0521">NADP</keyword>
<keyword id="KW-0560">Oxidoreductase</keyword>
<keyword id="KW-1185">Reference proteome</keyword>
<keyword id="KW-0915">Sodium</keyword>
<keyword id="KW-0791">Threonine biosynthesis</keyword>
<comment type="function">
    <text evidence="3">Catalyzes the conversion of L-aspartate-beta-semialdehyde (L-Asa) to L-homoserine (L-Hse), the third step in the biosynthesis of threonine and methionine from aspartate.</text>
</comment>
<comment type="catalytic activity">
    <reaction evidence="3">
        <text>L-homoserine + NADP(+) = L-aspartate 4-semialdehyde + NADPH + H(+)</text>
        <dbReference type="Rhea" id="RHEA:15761"/>
        <dbReference type="ChEBI" id="CHEBI:15378"/>
        <dbReference type="ChEBI" id="CHEBI:57476"/>
        <dbReference type="ChEBI" id="CHEBI:57783"/>
        <dbReference type="ChEBI" id="CHEBI:58349"/>
        <dbReference type="ChEBI" id="CHEBI:537519"/>
        <dbReference type="EC" id="1.1.1.3"/>
    </reaction>
    <physiologicalReaction direction="right-to-left" evidence="3">
        <dbReference type="Rhea" id="RHEA:15763"/>
    </physiologicalReaction>
</comment>
<comment type="catalytic activity">
    <reaction evidence="3">
        <text>L-homoserine + NAD(+) = L-aspartate 4-semialdehyde + NADH + H(+)</text>
        <dbReference type="Rhea" id="RHEA:15757"/>
        <dbReference type="ChEBI" id="CHEBI:15378"/>
        <dbReference type="ChEBI" id="CHEBI:57476"/>
        <dbReference type="ChEBI" id="CHEBI:57540"/>
        <dbReference type="ChEBI" id="CHEBI:57945"/>
        <dbReference type="ChEBI" id="CHEBI:537519"/>
        <dbReference type="EC" id="1.1.1.3"/>
    </reaction>
    <physiologicalReaction direction="right-to-left" evidence="3">
        <dbReference type="Rhea" id="RHEA:15759"/>
    </physiologicalReaction>
</comment>
<comment type="cofactor">
    <cofactor evidence="3">
        <name>a metal cation</name>
        <dbReference type="ChEBI" id="CHEBI:25213"/>
    </cofactor>
    <text evidence="3">A sodium ion is seen in the structure; a metal ion may subtly affect the relative position of the nucleotide-binding region to influence enzyme activity, and could increase the stability of the enzyme.</text>
</comment>
<comment type="pathway">
    <text evidence="3">Amino-acid biosynthesis; L-methionine biosynthesis via de novo pathway; L-homoserine from L-aspartate: step 3/3.</text>
</comment>
<comment type="pathway">
    <text evidence="3">Amino-acid biosynthesis; L-threonine biosynthesis; L-threonine from L-aspartate: step 3/5.</text>
</comment>
<comment type="similarity">
    <text evidence="6">Belongs to the homoserine dehydrogenase family.</text>
</comment>
<gene>
    <name type="primary">hom</name>
    <name type="ordered locus">sll0455</name>
</gene>
<sequence length="433" mass="45486">MTVKIGLLGLGTVGSGTVEILQDPQGRSPLLKAIEVKAVGVRSLDKPRQVNLPPEVLTTDLEAIVTDPDIAIVVELMGGLEPARSLILQAIAHKKHIVTANKAVIARYGPEIYEAANQHGVYVLLEAAVGGGIPIIKPLKQSLGGNRIQSIVGILNGTTNYILSRMTSEGADFDEVLTAAQQLGYAEADPSADVDGLDAADKIAILASLGFGGRVKREDVACEGIRSVSAVDIAYADRLGFVIKLLAIADGNAGEDSEALQLRVHPTLIAKDHPLASVNGVYNGVLVTGDPLGQVMFYGRGAGAGPTASAVVSDVINIVGIITSSDENPALDPLLSCTHQHYCQVSPIEDLVTRFYCRFLCADVPGVIGHLGMGFGNHGVSLESLVQIGFTDGCAEIVVVTHDVREGDYRAALEEISQLEAVKEIPSVIRVLS</sequence>
<accession>P52986</accession>